<proteinExistence type="inferred from homology"/>
<evidence type="ECO:0000255" key="1">
    <source>
        <dbReference type="HAMAP-Rule" id="MF_00275"/>
    </source>
</evidence>
<feature type="chain" id="PRO_1000022210" description="Potassium-transporting ATPase potassium-binding subunit">
    <location>
        <begin position="1"/>
        <end position="601"/>
    </location>
</feature>
<feature type="transmembrane region" description="Helical" evidence="1">
    <location>
        <begin position="3"/>
        <end position="23"/>
    </location>
</feature>
<feature type="transmembrane region" description="Helical" evidence="1">
    <location>
        <begin position="62"/>
        <end position="82"/>
    </location>
</feature>
<feature type="transmembrane region" description="Helical" evidence="1">
    <location>
        <begin position="132"/>
        <end position="152"/>
    </location>
</feature>
<feature type="transmembrane region" description="Helical" evidence="1">
    <location>
        <begin position="179"/>
        <end position="199"/>
    </location>
</feature>
<feature type="transmembrane region" description="Helical" evidence="1">
    <location>
        <begin position="283"/>
        <end position="303"/>
    </location>
</feature>
<feature type="transmembrane region" description="Helical" evidence="1">
    <location>
        <begin position="314"/>
        <end position="334"/>
    </location>
</feature>
<feature type="transmembrane region" description="Helical" evidence="1">
    <location>
        <begin position="367"/>
        <end position="387"/>
    </location>
</feature>
<feature type="transmembrane region" description="Helical" evidence="1">
    <location>
        <begin position="397"/>
        <end position="417"/>
    </location>
</feature>
<feature type="transmembrane region" description="Helical" evidence="1">
    <location>
        <begin position="419"/>
        <end position="439"/>
    </location>
</feature>
<feature type="transmembrane region" description="Helical" evidence="1">
    <location>
        <begin position="459"/>
        <end position="479"/>
    </location>
</feature>
<feature type="transmembrane region" description="Helical" evidence="1">
    <location>
        <begin position="523"/>
        <end position="543"/>
    </location>
</feature>
<feature type="transmembrane region" description="Helical" evidence="1">
    <location>
        <begin position="564"/>
        <end position="584"/>
    </location>
</feature>
<gene>
    <name evidence="1" type="primary">kdpA</name>
    <name type="ordered locus">Aave_0355</name>
</gene>
<accession>A1TJ24</accession>
<name>KDPA_PARC0</name>
<reference key="1">
    <citation type="submission" date="2006-12" db="EMBL/GenBank/DDBJ databases">
        <title>Complete sequence of Acidovorax avenae subsp. citrulli AAC00-1.</title>
        <authorList>
            <person name="Copeland A."/>
            <person name="Lucas S."/>
            <person name="Lapidus A."/>
            <person name="Barry K."/>
            <person name="Detter J.C."/>
            <person name="Glavina del Rio T."/>
            <person name="Dalin E."/>
            <person name="Tice H."/>
            <person name="Pitluck S."/>
            <person name="Kiss H."/>
            <person name="Brettin T."/>
            <person name="Bruce D."/>
            <person name="Han C."/>
            <person name="Tapia R."/>
            <person name="Gilna P."/>
            <person name="Schmutz J."/>
            <person name="Larimer F."/>
            <person name="Land M."/>
            <person name="Hauser L."/>
            <person name="Kyrpides N."/>
            <person name="Kim E."/>
            <person name="Stahl D."/>
            <person name="Richardson P."/>
        </authorList>
    </citation>
    <scope>NUCLEOTIDE SEQUENCE [LARGE SCALE GENOMIC DNA]</scope>
    <source>
        <strain>AAC00-1</strain>
    </source>
</reference>
<organism>
    <name type="scientific">Paracidovorax citrulli (strain AAC00-1)</name>
    <name type="common">Acidovorax citrulli</name>
    <dbReference type="NCBI Taxonomy" id="397945"/>
    <lineage>
        <taxon>Bacteria</taxon>
        <taxon>Pseudomonadati</taxon>
        <taxon>Pseudomonadota</taxon>
        <taxon>Betaproteobacteria</taxon>
        <taxon>Burkholderiales</taxon>
        <taxon>Comamonadaceae</taxon>
        <taxon>Paracidovorax</taxon>
    </lineage>
</organism>
<keyword id="KW-0997">Cell inner membrane</keyword>
<keyword id="KW-1003">Cell membrane</keyword>
<keyword id="KW-0406">Ion transport</keyword>
<keyword id="KW-0472">Membrane</keyword>
<keyword id="KW-0630">Potassium</keyword>
<keyword id="KW-0633">Potassium transport</keyword>
<keyword id="KW-0812">Transmembrane</keyword>
<keyword id="KW-1133">Transmembrane helix</keyword>
<keyword id="KW-0813">Transport</keyword>
<dbReference type="EMBL" id="CP000512">
    <property type="protein sequence ID" value="ABM30962.1"/>
    <property type="molecule type" value="Genomic_DNA"/>
</dbReference>
<dbReference type="RefSeq" id="WP_011793539.1">
    <property type="nucleotide sequence ID" value="NC_008752.1"/>
</dbReference>
<dbReference type="SMR" id="A1TJ24"/>
<dbReference type="STRING" id="397945.Aave_0355"/>
<dbReference type="KEGG" id="aav:Aave_0355"/>
<dbReference type="eggNOG" id="COG2060">
    <property type="taxonomic scope" value="Bacteria"/>
</dbReference>
<dbReference type="HOGENOM" id="CLU_018614_3_0_4"/>
<dbReference type="OrthoDB" id="9763796at2"/>
<dbReference type="Proteomes" id="UP000002596">
    <property type="component" value="Chromosome"/>
</dbReference>
<dbReference type="GO" id="GO:0005886">
    <property type="term" value="C:plasma membrane"/>
    <property type="evidence" value="ECO:0007669"/>
    <property type="project" value="UniProtKB-SubCell"/>
</dbReference>
<dbReference type="GO" id="GO:0008556">
    <property type="term" value="F:P-type potassium transmembrane transporter activity"/>
    <property type="evidence" value="ECO:0007669"/>
    <property type="project" value="InterPro"/>
</dbReference>
<dbReference type="GO" id="GO:0030955">
    <property type="term" value="F:potassium ion binding"/>
    <property type="evidence" value="ECO:0007669"/>
    <property type="project" value="UniProtKB-UniRule"/>
</dbReference>
<dbReference type="HAMAP" id="MF_00275">
    <property type="entry name" value="KdpA"/>
    <property type="match status" value="1"/>
</dbReference>
<dbReference type="InterPro" id="IPR004623">
    <property type="entry name" value="KdpA"/>
</dbReference>
<dbReference type="NCBIfam" id="TIGR00680">
    <property type="entry name" value="kdpA"/>
    <property type="match status" value="1"/>
</dbReference>
<dbReference type="PANTHER" id="PTHR30607">
    <property type="entry name" value="POTASSIUM-TRANSPORTING ATPASE A CHAIN"/>
    <property type="match status" value="1"/>
</dbReference>
<dbReference type="PANTHER" id="PTHR30607:SF2">
    <property type="entry name" value="POTASSIUM-TRANSPORTING ATPASE POTASSIUM-BINDING SUBUNIT"/>
    <property type="match status" value="1"/>
</dbReference>
<dbReference type="Pfam" id="PF03814">
    <property type="entry name" value="KdpA"/>
    <property type="match status" value="1"/>
</dbReference>
<dbReference type="PIRSF" id="PIRSF001294">
    <property type="entry name" value="K_ATPaseA"/>
    <property type="match status" value="1"/>
</dbReference>
<sequence>MTASAWGLLALFLSVLGLLAWPLGRGLAAVCDGRLPGWMHRAEAPLYRLAGVRPEAGMHWRHYALALLAFNALGVFAVYALQRLQGVLPLNPQGLPAVAGDSAFNTAVSFVSNTNWQGYAGESTMGYLVQMLGLSVQNFLSAATGIAVAFALARGFAARGGDGAGHVGNFWADIVRITAWVLVPLSFVLAVFLAGQGVIQNFTAYQDVATVEATVYQDPQSDAQGQPLKDASGNPLTREVRTRTQTLPMGPVASQEAIKMLGTNGGGFFNANSAHPYENPTPLTNLAQMLAIFLVPAALCFAFGRVVGDWRQGVAILAAMTLMFVVAVVAVTAAEQAGNPALSALGADPVASALQAGGNMEGKEVRFGISASALFAAVTTAASCGAVNAMHDSFTPLGGMVPMVLMQLGEVVFGGAGSGLYGMLVFAILAVFIAGLMIGRTPEYLGKKIEVREMKLTSVAILVTPLLVLVGTAVAVLAPAGQAGIANPGAHGFSEVLYALTSAANNNGSAFAGLSANTPFYNVLLALAMWFGRFGVIVPVLAIAGSLAAKKRLPPGPGTMPTHGPLFVALLVFTVLLVGLLNYVPSLALGPVVEHLVLQAR</sequence>
<protein>
    <recommendedName>
        <fullName evidence="1">Potassium-transporting ATPase potassium-binding subunit</fullName>
    </recommendedName>
    <alternativeName>
        <fullName evidence="1">ATP phosphohydrolase [potassium-transporting] A chain</fullName>
    </alternativeName>
    <alternativeName>
        <fullName evidence="1">Potassium-binding and translocating subunit A</fullName>
    </alternativeName>
    <alternativeName>
        <fullName evidence="1">Potassium-translocating ATPase A chain</fullName>
    </alternativeName>
</protein>
<comment type="function">
    <text evidence="1">Part of the high-affinity ATP-driven potassium transport (or Kdp) system, which catalyzes the hydrolysis of ATP coupled with the electrogenic transport of potassium into the cytoplasm. This subunit binds the periplasmic potassium ions and delivers the ions to the membrane domain of KdpB through an intramembrane tunnel.</text>
</comment>
<comment type="subunit">
    <text evidence="1">The system is composed of three essential subunits: KdpA, KdpB and KdpC.</text>
</comment>
<comment type="subcellular location">
    <subcellularLocation>
        <location evidence="1">Cell inner membrane</location>
        <topology evidence="1">Multi-pass membrane protein</topology>
    </subcellularLocation>
</comment>
<comment type="similarity">
    <text evidence="1">Belongs to the KdpA family.</text>
</comment>